<sequence>MASYSTNDFKPGLKFIQDGEPCVIVENEFVKPGKGQAFTRTKIRKLISGKVLEINFKSGTSVEAADVVDYNYTYSYKDEDFWYFMHPETFEQISVDEKALGDNDKWLVDQAECIITLWNGSAISVTPPNFVELEVVETDPGLKGDTAGTGGKPATLSTGAVVRVPLFVQIGEVIRVDTRSGEYVSRVK</sequence>
<protein>
    <recommendedName>
        <fullName evidence="1">Elongation factor P</fullName>
        <shortName evidence="1">EF-P</shortName>
    </recommendedName>
</protein>
<feature type="chain" id="PRO_1000010670" description="Elongation factor P">
    <location>
        <begin position="1"/>
        <end position="188"/>
    </location>
</feature>
<feature type="modified residue" description="N6-(3,6-diaminohexanoyl)-5-hydroxylysine" evidence="1">
    <location>
        <position position="34"/>
    </location>
</feature>
<comment type="function">
    <text evidence="1">Involved in peptide bond synthesis. Alleviates ribosome stalling that occurs when 3 or more consecutive Pro residues or the sequence PPG is present in a protein, possibly by augmenting the peptidyl transferase activity of the ribosome. Modification of Lys-34 is required for alleviation.</text>
</comment>
<comment type="pathway">
    <text evidence="1">Protein biosynthesis; polypeptide chain elongation.</text>
</comment>
<comment type="subcellular location">
    <subcellularLocation>
        <location evidence="1">Cytoplasm</location>
    </subcellularLocation>
</comment>
<comment type="PTM">
    <text evidence="1">May be beta-lysylated on the epsilon-amino group of Lys-34 by the combined action of EpmA and EpmB, and then hydroxylated on the C5 position of the same residue by EpmC (if this protein is present). Lysylation is critical for the stimulatory effect of EF-P on peptide-bond formation. The lysylation moiety may extend toward the peptidyltransferase center and stabilize the terminal 3-CCA end of the tRNA. Hydroxylation of the C5 position on Lys-34 may allow additional potential stabilizing hydrogen-bond interactions with the P-tRNA.</text>
</comment>
<comment type="similarity">
    <text evidence="1">Belongs to the elongation factor P family.</text>
</comment>
<proteinExistence type="inferred from homology"/>
<dbReference type="EMBL" id="CP000569">
    <property type="protein sequence ID" value="ABN73778.1"/>
    <property type="molecule type" value="Genomic_DNA"/>
</dbReference>
<dbReference type="RefSeq" id="WP_005600860.1">
    <property type="nucleotide sequence ID" value="NC_009053.1"/>
</dbReference>
<dbReference type="SMR" id="A3N042"/>
<dbReference type="STRING" id="416269.APL_0678"/>
<dbReference type="EnsemblBacteria" id="ABN73778">
    <property type="protein sequence ID" value="ABN73778"/>
    <property type="gene ID" value="APL_0678"/>
</dbReference>
<dbReference type="GeneID" id="48598859"/>
<dbReference type="KEGG" id="apl:APL_0678"/>
<dbReference type="eggNOG" id="COG0231">
    <property type="taxonomic scope" value="Bacteria"/>
</dbReference>
<dbReference type="HOGENOM" id="CLU_074944_0_0_6"/>
<dbReference type="UniPathway" id="UPA00345"/>
<dbReference type="Proteomes" id="UP000001432">
    <property type="component" value="Chromosome"/>
</dbReference>
<dbReference type="GO" id="GO:0005737">
    <property type="term" value="C:cytoplasm"/>
    <property type="evidence" value="ECO:0007669"/>
    <property type="project" value="UniProtKB-SubCell"/>
</dbReference>
<dbReference type="GO" id="GO:0003746">
    <property type="term" value="F:translation elongation factor activity"/>
    <property type="evidence" value="ECO:0007669"/>
    <property type="project" value="UniProtKB-UniRule"/>
</dbReference>
<dbReference type="GO" id="GO:0043043">
    <property type="term" value="P:peptide biosynthetic process"/>
    <property type="evidence" value="ECO:0007669"/>
    <property type="project" value="InterPro"/>
</dbReference>
<dbReference type="CDD" id="cd04470">
    <property type="entry name" value="S1_EF-P_repeat_1"/>
    <property type="match status" value="1"/>
</dbReference>
<dbReference type="CDD" id="cd05794">
    <property type="entry name" value="S1_EF-P_repeat_2"/>
    <property type="match status" value="1"/>
</dbReference>
<dbReference type="FunFam" id="2.30.30.30:FF:000003">
    <property type="entry name" value="Elongation factor P"/>
    <property type="match status" value="1"/>
</dbReference>
<dbReference type="FunFam" id="2.40.50.140:FF:000004">
    <property type="entry name" value="Elongation factor P"/>
    <property type="match status" value="1"/>
</dbReference>
<dbReference type="FunFam" id="2.40.50.140:FF:000009">
    <property type="entry name" value="Elongation factor P"/>
    <property type="match status" value="1"/>
</dbReference>
<dbReference type="Gene3D" id="2.30.30.30">
    <property type="match status" value="1"/>
</dbReference>
<dbReference type="Gene3D" id="2.40.50.140">
    <property type="entry name" value="Nucleic acid-binding proteins"/>
    <property type="match status" value="2"/>
</dbReference>
<dbReference type="HAMAP" id="MF_00141">
    <property type="entry name" value="EF_P"/>
    <property type="match status" value="1"/>
</dbReference>
<dbReference type="InterPro" id="IPR015365">
    <property type="entry name" value="Elong-fact-P_C"/>
</dbReference>
<dbReference type="InterPro" id="IPR012340">
    <property type="entry name" value="NA-bd_OB-fold"/>
</dbReference>
<dbReference type="InterPro" id="IPR014722">
    <property type="entry name" value="Rib_uL2_dom2"/>
</dbReference>
<dbReference type="InterPro" id="IPR020599">
    <property type="entry name" value="Transl_elong_fac_P/YeiP"/>
</dbReference>
<dbReference type="InterPro" id="IPR013185">
    <property type="entry name" value="Transl_elong_KOW-like"/>
</dbReference>
<dbReference type="InterPro" id="IPR001059">
    <property type="entry name" value="Transl_elong_P/YeiP_cen"/>
</dbReference>
<dbReference type="InterPro" id="IPR013852">
    <property type="entry name" value="Transl_elong_P/YeiP_CS"/>
</dbReference>
<dbReference type="InterPro" id="IPR011768">
    <property type="entry name" value="Transl_elongation_fac_P"/>
</dbReference>
<dbReference type="InterPro" id="IPR008991">
    <property type="entry name" value="Translation_prot_SH3-like_sf"/>
</dbReference>
<dbReference type="NCBIfam" id="TIGR00038">
    <property type="entry name" value="efp"/>
    <property type="match status" value="1"/>
</dbReference>
<dbReference type="NCBIfam" id="NF001810">
    <property type="entry name" value="PRK00529.1"/>
    <property type="match status" value="1"/>
</dbReference>
<dbReference type="PANTHER" id="PTHR30053">
    <property type="entry name" value="ELONGATION FACTOR P"/>
    <property type="match status" value="1"/>
</dbReference>
<dbReference type="PANTHER" id="PTHR30053:SF12">
    <property type="entry name" value="ELONGATION FACTOR P (EF-P) FAMILY PROTEIN"/>
    <property type="match status" value="1"/>
</dbReference>
<dbReference type="Pfam" id="PF01132">
    <property type="entry name" value="EFP"/>
    <property type="match status" value="1"/>
</dbReference>
<dbReference type="Pfam" id="PF08207">
    <property type="entry name" value="EFP_N"/>
    <property type="match status" value="1"/>
</dbReference>
<dbReference type="Pfam" id="PF09285">
    <property type="entry name" value="Elong-fact-P_C"/>
    <property type="match status" value="1"/>
</dbReference>
<dbReference type="PIRSF" id="PIRSF005901">
    <property type="entry name" value="EF-P"/>
    <property type="match status" value="1"/>
</dbReference>
<dbReference type="SMART" id="SM01185">
    <property type="entry name" value="EFP"/>
    <property type="match status" value="1"/>
</dbReference>
<dbReference type="SMART" id="SM00841">
    <property type="entry name" value="Elong-fact-P_C"/>
    <property type="match status" value="1"/>
</dbReference>
<dbReference type="SUPFAM" id="SSF50249">
    <property type="entry name" value="Nucleic acid-binding proteins"/>
    <property type="match status" value="2"/>
</dbReference>
<dbReference type="SUPFAM" id="SSF50104">
    <property type="entry name" value="Translation proteins SH3-like domain"/>
    <property type="match status" value="1"/>
</dbReference>
<dbReference type="PROSITE" id="PS01275">
    <property type="entry name" value="EFP"/>
    <property type="match status" value="1"/>
</dbReference>
<evidence type="ECO:0000255" key="1">
    <source>
        <dbReference type="HAMAP-Rule" id="MF_00141"/>
    </source>
</evidence>
<name>EFP_ACTP2</name>
<reference key="1">
    <citation type="journal article" date="2008" name="J. Bacteriol.">
        <title>The complete genome sequence of Actinobacillus pleuropneumoniae L20 (serotype 5b).</title>
        <authorList>
            <person name="Foote S.J."/>
            <person name="Bosse J.T."/>
            <person name="Bouevitch A.B."/>
            <person name="Langford P.R."/>
            <person name="Young N.M."/>
            <person name="Nash J.H.E."/>
        </authorList>
    </citation>
    <scope>NUCLEOTIDE SEQUENCE [LARGE SCALE GENOMIC DNA]</scope>
    <source>
        <strain>L20</strain>
    </source>
</reference>
<keyword id="KW-0963">Cytoplasm</keyword>
<keyword id="KW-0251">Elongation factor</keyword>
<keyword id="KW-0379">Hydroxylation</keyword>
<keyword id="KW-0648">Protein biosynthesis</keyword>
<keyword id="KW-1185">Reference proteome</keyword>
<gene>
    <name evidence="1" type="primary">efp</name>
    <name type="ordered locus">APL_0678</name>
</gene>
<organism>
    <name type="scientific">Actinobacillus pleuropneumoniae serotype 5b (strain L20)</name>
    <dbReference type="NCBI Taxonomy" id="416269"/>
    <lineage>
        <taxon>Bacteria</taxon>
        <taxon>Pseudomonadati</taxon>
        <taxon>Pseudomonadota</taxon>
        <taxon>Gammaproteobacteria</taxon>
        <taxon>Pasteurellales</taxon>
        <taxon>Pasteurellaceae</taxon>
        <taxon>Actinobacillus</taxon>
    </lineage>
</organism>
<accession>A3N042</accession>